<name>TERA_RAT</name>
<organism>
    <name type="scientific">Rattus norvegicus</name>
    <name type="common">Rat</name>
    <dbReference type="NCBI Taxonomy" id="10116"/>
    <lineage>
        <taxon>Eukaryota</taxon>
        <taxon>Metazoa</taxon>
        <taxon>Chordata</taxon>
        <taxon>Craniata</taxon>
        <taxon>Vertebrata</taxon>
        <taxon>Euteleostomi</taxon>
        <taxon>Mammalia</taxon>
        <taxon>Eutheria</taxon>
        <taxon>Euarchontoglires</taxon>
        <taxon>Glires</taxon>
        <taxon>Rodentia</taxon>
        <taxon>Myomorpha</taxon>
        <taxon>Muroidea</taxon>
        <taxon>Muridae</taxon>
        <taxon>Murinae</taxon>
        <taxon>Rattus</taxon>
    </lineage>
</organism>
<proteinExistence type="evidence at protein level"/>
<accession>P46462</accession>
<keyword id="KW-0007">Acetylation</keyword>
<keyword id="KW-0067">ATP-binding</keyword>
<keyword id="KW-0072">Autophagy</keyword>
<keyword id="KW-0963">Cytoplasm</keyword>
<keyword id="KW-0903">Direct protein sequencing</keyword>
<keyword id="KW-0227">DNA damage</keyword>
<keyword id="KW-0234">DNA repair</keyword>
<keyword id="KW-0256">Endoplasmic reticulum</keyword>
<keyword id="KW-0378">Hydrolase</keyword>
<keyword id="KW-1017">Isopeptide bond</keyword>
<keyword id="KW-0446">Lipid-binding</keyword>
<keyword id="KW-0488">Methylation</keyword>
<keyword id="KW-0547">Nucleotide-binding</keyword>
<keyword id="KW-0539">Nucleus</keyword>
<keyword id="KW-0597">Phosphoprotein</keyword>
<keyword id="KW-1185">Reference proteome</keyword>
<keyword id="KW-0813">Transport</keyword>
<keyword id="KW-0832">Ubl conjugation</keyword>
<gene>
    <name type="primary">Vcp</name>
</gene>
<reference key="1">
    <citation type="journal article" date="1994" name="J. Cell Biol.">
        <title>Isolation and characterization of the principal ATPase associated with transitional endoplasmic reticulum of rat liver.</title>
        <authorList>
            <person name="Zhang L."/>
            <person name="Ashendel C.L."/>
            <person name="Becker G.W."/>
            <person name="Morre D.J."/>
        </authorList>
    </citation>
    <scope>NUCLEOTIDE SEQUENCE [MRNA]</scope>
    <scope>PARTIAL PROTEIN SEQUENCE</scope>
    <source>
        <strain>Sprague-Dawley</strain>
        <tissue>Liver</tissue>
    </source>
</reference>
<reference key="2">
    <citation type="journal article" date="2004" name="Genome Res.">
        <title>The status, quality, and expansion of the NIH full-length cDNA project: the Mammalian Gene Collection (MGC).</title>
        <authorList>
            <consortium name="The MGC Project Team"/>
        </authorList>
    </citation>
    <scope>NUCLEOTIDE SEQUENCE [LARGE SCALE MRNA]</scope>
    <source>
        <tissue>Prostate</tissue>
    </source>
</reference>
<reference key="3">
    <citation type="submission" date="2007-04" db="UniProtKB">
        <authorList>
            <person name="Lubec G."/>
            <person name="Diao W."/>
        </authorList>
    </citation>
    <scope>PROTEIN SEQUENCE OF 46-53; 149-155; 192-210; 218-225; 240-251; 296-312; 366-386; 454-465; 616-638; 669-677 AND 701-709</scope>
    <scope>IDENTIFICATION BY MASS SPECTROMETRY</scope>
    <source>
        <strain>Sprague-Dawley</strain>
        <tissue>Hippocampus</tissue>
    </source>
</reference>
<reference key="4">
    <citation type="journal article" date="1998" name="Cell">
        <title>Syntaxin 5 is a common component of the NSF- and p97-mediated reassembly pathways of Golgi cisternae from mitotic Golgi fragments in vitro.</title>
        <authorList>
            <person name="Rabouille C."/>
            <person name="Kondo H."/>
            <person name="Newman R."/>
            <person name="Hui N."/>
            <person name="Freemont P."/>
            <person name="Warren G."/>
        </authorList>
    </citation>
    <scope>INTERACTION WITH STX5A</scope>
</reference>
<reference key="5">
    <citation type="journal article" date="2000" name="EMBO J.">
        <title>A complex of mammalian ufd1 and npl4 links the AAA-ATPase, p97, to ubiquitin and nuclear transport pathways.</title>
        <authorList>
            <person name="Meyer H.H."/>
            <person name="Shorter J.G."/>
            <person name="Seemann J."/>
            <person name="Pappin D."/>
            <person name="Warren G."/>
        </authorList>
    </citation>
    <scope>INTERACTION WITH NPLOC4; UFD1; NSFL1C AND UBE4B</scope>
    <scope>SUBCELLULAR LOCATION</scope>
</reference>
<reference key="6">
    <citation type="journal article" date="2000" name="Mol. Biol. Cell">
        <title>Role of p97 and syntaxin 5 in the assembly of transitional endoplasmic reticulum.</title>
        <authorList>
            <person name="Roy L."/>
            <person name="Bergeron J.J.M."/>
            <person name="Lavoie C."/>
            <person name="Hendriks R."/>
            <person name="Gushue J."/>
            <person name="Fazel A."/>
            <person name="Pelletier A."/>
            <person name="Morre D.J."/>
            <person name="Subramaniam V.N."/>
            <person name="Hong W."/>
            <person name="Paiement J."/>
        </authorList>
    </citation>
    <scope>FUNCTION</scope>
</reference>
<reference key="7">
    <citation type="journal article" date="2002" name="Biochemistry">
        <title>Phospholipid species act as modulators in p97/p47-mediated fusion of Golgi membranes.</title>
        <authorList>
            <person name="Pecheur E.-I."/>
            <person name="Martin I."/>
            <person name="Maier O."/>
            <person name="Bakowsky U."/>
            <person name="Ruysschaert J.-M."/>
            <person name="Hoekstra D."/>
        </authorList>
    </citation>
    <scope>INTERACTION WITH MEMBRANES</scope>
</reference>
<reference key="8">
    <citation type="journal article" date="2002" name="EMBO J.">
        <title>Direct binding of ubiquitin conjugates by the mammalian p97 adaptor complexes, p47 and Ufd1-Npl4.</title>
        <authorList>
            <person name="Meyer H.H."/>
            <person name="Wang Y."/>
            <person name="Warren G."/>
        </authorList>
    </citation>
    <scope>FUNCTION</scope>
    <scope>INTERACTION WITH NSFL1C; NAP1L4 AND UFD1</scope>
</reference>
<reference key="9">
    <citation type="journal article" date="2002" name="J. Cell Biol.">
        <title>VCIP135, a novel essential factor for p97/p47-mediated membrane fusion, is required for Golgi and ER assembly in vivo.</title>
        <authorList>
            <person name="Uchiyama K."/>
            <person name="Jokitalo E."/>
            <person name="Kano F."/>
            <person name="Murata M."/>
            <person name="Zhang X."/>
            <person name="Canas B."/>
            <person name="Newman R."/>
            <person name="Rabouille C."/>
            <person name="Pappin D."/>
            <person name="Freemont P."/>
            <person name="Kondo H."/>
        </authorList>
    </citation>
    <scope>INTERACTION WITH VCIP135</scope>
</reference>
<reference key="10">
    <citation type="journal article" date="2003" name="J. Cell Biol.">
        <title>The localization and phosphorylation of p47 are important for Golgi disassembly-assembly during the cell cycle.</title>
        <authorList>
            <person name="Uchiyama K."/>
            <person name="Jokitalo E."/>
            <person name="Lindman M."/>
            <person name="Jackman M."/>
            <person name="Kano F."/>
            <person name="Murata M."/>
            <person name="Zhang X."/>
            <person name="Kondo H."/>
        </authorList>
    </citation>
    <scope>PHOSPHORYLATION</scope>
</reference>
<reference key="11">
    <citation type="journal article" date="2012" name="Nat. Commun.">
        <title>Quantitative maps of protein phosphorylation sites across 14 different rat organs and tissues.</title>
        <authorList>
            <person name="Lundby A."/>
            <person name="Secher A."/>
            <person name="Lage K."/>
            <person name="Nordsborg N.B."/>
            <person name="Dmytriyev A."/>
            <person name="Lundby C."/>
            <person name="Olsen J.V."/>
        </authorList>
    </citation>
    <scope>PHOSPHORYLATION [LARGE SCALE ANALYSIS] AT SER-3 AND SER-7</scope>
    <scope>IDENTIFICATION BY MASS SPECTROMETRY [LARGE SCALE ANALYSIS]</scope>
</reference>
<reference key="12">
    <citation type="journal article" date="2015" name="Biochem. Pharmacol.">
        <title>UBXN2A regulates nicotinic receptor degradation by modulating the E3 ligase activity of CHIP.</title>
        <authorList>
            <person name="Teng Y."/>
            <person name="Rezvani K."/>
            <person name="De Biasi M."/>
        </authorList>
    </citation>
    <scope>FUNCTION</scope>
    <scope>IDENTIFICATION IN A COMPLEX WITH STUB1; UBXN2A AND CHRNA3</scope>
    <scope>INTERACTION WITH UBXN2A</scope>
</reference>
<evidence type="ECO:0000250" key="1"/>
<evidence type="ECO:0000250" key="2">
    <source>
        <dbReference type="UniProtKB" id="P23787"/>
    </source>
</evidence>
<evidence type="ECO:0000250" key="3">
    <source>
        <dbReference type="UniProtKB" id="P55072"/>
    </source>
</evidence>
<evidence type="ECO:0000250" key="4">
    <source>
        <dbReference type="UniProtKB" id="Q01853"/>
    </source>
</evidence>
<evidence type="ECO:0000256" key="5">
    <source>
        <dbReference type="SAM" id="MobiDB-lite"/>
    </source>
</evidence>
<evidence type="ECO:0000269" key="6">
    <source>
    </source>
</evidence>
<evidence type="ECO:0000269" key="7">
    <source>
    </source>
</evidence>
<evidence type="ECO:0000269" key="8">
    <source>
    </source>
</evidence>
<evidence type="ECO:0000269" key="9">
    <source>
    </source>
</evidence>
<evidence type="ECO:0000269" key="10">
    <source>
    </source>
</evidence>
<evidence type="ECO:0000269" key="11">
    <source>
    </source>
</evidence>
<evidence type="ECO:0000269" key="12">
    <source>
    </source>
</evidence>
<evidence type="ECO:0000305" key="13"/>
<evidence type="ECO:0007744" key="14">
    <source>
    </source>
</evidence>
<dbReference type="EC" id="3.6.4.6" evidence="3"/>
<dbReference type="EMBL" id="U11760">
    <property type="protein sequence ID" value="AAC52154.1"/>
    <property type="molecule type" value="mRNA"/>
</dbReference>
<dbReference type="EMBL" id="BC060518">
    <property type="protein sequence ID" value="AAH60518.1"/>
    <property type="molecule type" value="mRNA"/>
</dbReference>
<dbReference type="PIR" id="A55190">
    <property type="entry name" value="A55190"/>
</dbReference>
<dbReference type="RefSeq" id="NP_446316.1">
    <property type="nucleotide sequence ID" value="NM_053864.2"/>
</dbReference>
<dbReference type="SMR" id="P46462"/>
<dbReference type="BioGRID" id="250528">
    <property type="interactions" value="29"/>
</dbReference>
<dbReference type="ComplexPortal" id="CPX-138">
    <property type="entry name" value="Vcp-Npl4-Ufd1 AAA ATPase complex"/>
</dbReference>
<dbReference type="ComplexPortal" id="CPX-263">
    <property type="entry name" value="Vcp-Nsfl1c AAA ATPase complex"/>
</dbReference>
<dbReference type="CORUM" id="P46462"/>
<dbReference type="FunCoup" id="P46462">
    <property type="interactions" value="2702"/>
</dbReference>
<dbReference type="IntAct" id="P46462">
    <property type="interactions" value="12"/>
</dbReference>
<dbReference type="MINT" id="P46462"/>
<dbReference type="STRING" id="10116.ENSRNOP00000040121"/>
<dbReference type="GlyGen" id="P46462">
    <property type="glycosylation" value="1 site, 1 O-linked glycan (1 site)"/>
</dbReference>
<dbReference type="iPTMnet" id="P46462"/>
<dbReference type="PhosphoSitePlus" id="P46462"/>
<dbReference type="SwissPalm" id="P46462"/>
<dbReference type="jPOST" id="P46462"/>
<dbReference type="PaxDb" id="10116-ENSRNOP00000040121"/>
<dbReference type="Ensembl" id="ENSRNOT00000046102.3">
    <property type="protein sequence ID" value="ENSRNOP00000040121.2"/>
    <property type="gene ID" value="ENSRNOG00000034242.4"/>
</dbReference>
<dbReference type="GeneID" id="116643"/>
<dbReference type="KEGG" id="rno:116643"/>
<dbReference type="UCSC" id="RGD:621595">
    <property type="organism name" value="rat"/>
</dbReference>
<dbReference type="AGR" id="RGD:621595"/>
<dbReference type="CTD" id="7415"/>
<dbReference type="RGD" id="621595">
    <property type="gene designation" value="Vcp"/>
</dbReference>
<dbReference type="eggNOG" id="KOG0730">
    <property type="taxonomic scope" value="Eukaryota"/>
</dbReference>
<dbReference type="GeneTree" id="ENSGT00900000141071"/>
<dbReference type="HOGENOM" id="CLU_000688_12_3_1"/>
<dbReference type="InParanoid" id="P46462"/>
<dbReference type="OMA" id="VWPAYPE"/>
<dbReference type="OrthoDB" id="27435at2759"/>
<dbReference type="PhylomeDB" id="P46462"/>
<dbReference type="TreeFam" id="TF300542"/>
<dbReference type="BRENDA" id="3.6.4.6">
    <property type="organism ID" value="5301"/>
</dbReference>
<dbReference type="Reactome" id="R-RNO-110320">
    <property type="pathway name" value="Translesion Synthesis by POLH"/>
</dbReference>
<dbReference type="Reactome" id="R-RNO-3371511">
    <property type="pathway name" value="HSF1 activation"/>
</dbReference>
<dbReference type="Reactome" id="R-RNO-382556">
    <property type="pathway name" value="ABC-family proteins mediated transport"/>
</dbReference>
<dbReference type="Reactome" id="R-RNO-532668">
    <property type="pathway name" value="N-glycan trimming in the ER and Calnexin/Calreticulin cycle"/>
</dbReference>
<dbReference type="Reactome" id="R-RNO-5358346">
    <property type="pathway name" value="Hedgehog ligand biogenesis"/>
</dbReference>
<dbReference type="Reactome" id="R-RNO-5689877">
    <property type="pathway name" value="Josephin domain DUBs"/>
</dbReference>
<dbReference type="Reactome" id="R-RNO-5689896">
    <property type="pathway name" value="Ovarian tumor domain proteases"/>
</dbReference>
<dbReference type="Reactome" id="R-RNO-6798695">
    <property type="pathway name" value="Neutrophil degranulation"/>
</dbReference>
<dbReference type="Reactome" id="R-RNO-8951664">
    <property type="pathway name" value="Neddylation"/>
</dbReference>
<dbReference type="Reactome" id="R-RNO-9013407">
    <property type="pathway name" value="RHOH GTPase cycle"/>
</dbReference>
<dbReference type="Reactome" id="R-RNO-9755511">
    <property type="pathway name" value="KEAP1-NFE2L2 pathway"/>
</dbReference>
<dbReference type="PRO" id="PR:P46462"/>
<dbReference type="Proteomes" id="UP000002494">
    <property type="component" value="Chromosome 5"/>
</dbReference>
<dbReference type="Bgee" id="ENSRNOG00000034242">
    <property type="expression patterns" value="Expressed in skeletal muscle tissue and 19 other cell types or tissues"/>
</dbReference>
<dbReference type="GO" id="GO:1904949">
    <property type="term" value="C:ATPase complex"/>
    <property type="evidence" value="ECO:0000266"/>
    <property type="project" value="RGD"/>
</dbReference>
<dbReference type="GO" id="GO:0036064">
    <property type="term" value="C:ciliary basal body"/>
    <property type="evidence" value="ECO:0007669"/>
    <property type="project" value="Ensembl"/>
</dbReference>
<dbReference type="GO" id="GO:0005737">
    <property type="term" value="C:cytoplasm"/>
    <property type="evidence" value="ECO:0000266"/>
    <property type="project" value="RGD"/>
</dbReference>
<dbReference type="GO" id="GO:0010494">
    <property type="term" value="C:cytoplasmic stress granule"/>
    <property type="evidence" value="ECO:0000250"/>
    <property type="project" value="UniProtKB"/>
</dbReference>
<dbReference type="GO" id="GO:0005829">
    <property type="term" value="C:cytosol"/>
    <property type="evidence" value="ECO:0000314"/>
    <property type="project" value="MGI"/>
</dbReference>
<dbReference type="GO" id="GO:0036513">
    <property type="term" value="C:Derlin-1 retrotranslocation complex"/>
    <property type="evidence" value="ECO:0000266"/>
    <property type="project" value="RGD"/>
</dbReference>
<dbReference type="GO" id="GO:0005783">
    <property type="term" value="C:endoplasmic reticulum"/>
    <property type="evidence" value="ECO:0000266"/>
    <property type="project" value="RGD"/>
</dbReference>
<dbReference type="GO" id="GO:0005789">
    <property type="term" value="C:endoplasmic reticulum membrane"/>
    <property type="evidence" value="ECO:0000266"/>
    <property type="project" value="RGD"/>
</dbReference>
<dbReference type="GO" id="GO:0098978">
    <property type="term" value="C:glutamatergic synapse"/>
    <property type="evidence" value="ECO:0000314"/>
    <property type="project" value="SynGO"/>
</dbReference>
<dbReference type="GO" id="GO:0005811">
    <property type="term" value="C:lipid droplet"/>
    <property type="evidence" value="ECO:0000266"/>
    <property type="project" value="RGD"/>
</dbReference>
<dbReference type="GO" id="GO:0005654">
    <property type="term" value="C:nucleoplasm"/>
    <property type="evidence" value="ECO:0007669"/>
    <property type="project" value="Ensembl"/>
</dbReference>
<dbReference type="GO" id="GO:0005634">
    <property type="term" value="C:nucleus"/>
    <property type="evidence" value="ECO:0000266"/>
    <property type="project" value="RGD"/>
</dbReference>
<dbReference type="GO" id="GO:0048471">
    <property type="term" value="C:perinuclear region of cytoplasm"/>
    <property type="evidence" value="ECO:0000266"/>
    <property type="project" value="RGD"/>
</dbReference>
<dbReference type="GO" id="GO:0000502">
    <property type="term" value="C:proteasome complex"/>
    <property type="evidence" value="ECO:0000266"/>
    <property type="project" value="RGD"/>
</dbReference>
<dbReference type="GO" id="GO:0032991">
    <property type="term" value="C:protein-containing complex"/>
    <property type="evidence" value="ECO:0000266"/>
    <property type="project" value="RGD"/>
</dbReference>
<dbReference type="GO" id="GO:0035861">
    <property type="term" value="C:site of double-strand break"/>
    <property type="evidence" value="ECO:0000250"/>
    <property type="project" value="UniProtKB"/>
</dbReference>
<dbReference type="GO" id="GO:0045202">
    <property type="term" value="C:synapse"/>
    <property type="evidence" value="ECO:0000266"/>
    <property type="project" value="RGD"/>
</dbReference>
<dbReference type="GO" id="GO:0034098">
    <property type="term" value="C:VCP-NPL4-UFD1 AAA ATPase complex"/>
    <property type="evidence" value="ECO:0000314"/>
    <property type="project" value="ParkinsonsUK-UCL"/>
</dbReference>
<dbReference type="GO" id="GO:1990730">
    <property type="term" value="C:VCP-NSFL1C complex"/>
    <property type="evidence" value="ECO:0000353"/>
    <property type="project" value="ParkinsonsUK-UCL"/>
</dbReference>
<dbReference type="GO" id="GO:0043531">
    <property type="term" value="F:ADP binding"/>
    <property type="evidence" value="ECO:0000315"/>
    <property type="project" value="RGD"/>
</dbReference>
<dbReference type="GO" id="GO:0005524">
    <property type="term" value="F:ATP binding"/>
    <property type="evidence" value="ECO:0000314"/>
    <property type="project" value="BHF-UCL"/>
</dbReference>
<dbReference type="GO" id="GO:0016887">
    <property type="term" value="F:ATP hydrolysis activity"/>
    <property type="evidence" value="ECO:0000314"/>
    <property type="project" value="RGD"/>
</dbReference>
<dbReference type="GO" id="GO:1904288">
    <property type="term" value="F:BAT3 complex binding"/>
    <property type="evidence" value="ECO:0000266"/>
    <property type="project" value="RGD"/>
</dbReference>
<dbReference type="GO" id="GO:0035800">
    <property type="term" value="F:deubiquitinase activator activity"/>
    <property type="evidence" value="ECO:0000266"/>
    <property type="project" value="RGD"/>
</dbReference>
<dbReference type="GO" id="GO:0042802">
    <property type="term" value="F:identical protein binding"/>
    <property type="evidence" value="ECO:0000314"/>
    <property type="project" value="BHF-UCL"/>
</dbReference>
<dbReference type="GO" id="GO:0036435">
    <property type="term" value="F:K48-linked polyubiquitin modification-dependent protein binding"/>
    <property type="evidence" value="ECO:0000266"/>
    <property type="project" value="RGD"/>
</dbReference>
<dbReference type="GO" id="GO:0008289">
    <property type="term" value="F:lipid binding"/>
    <property type="evidence" value="ECO:0007669"/>
    <property type="project" value="UniProtKB-KW"/>
</dbReference>
<dbReference type="GO" id="GO:0042288">
    <property type="term" value="F:MHC class I protein binding"/>
    <property type="evidence" value="ECO:0000266"/>
    <property type="project" value="RGD"/>
</dbReference>
<dbReference type="GO" id="GO:0031593">
    <property type="term" value="F:polyubiquitin modification-dependent protein binding"/>
    <property type="evidence" value="ECO:0000266"/>
    <property type="project" value="RGD"/>
</dbReference>
<dbReference type="GO" id="GO:0019904">
    <property type="term" value="F:protein domain specific binding"/>
    <property type="evidence" value="ECO:0000266"/>
    <property type="project" value="RGD"/>
</dbReference>
<dbReference type="GO" id="GO:0019903">
    <property type="term" value="F:protein phosphatase binding"/>
    <property type="evidence" value="ECO:0000266"/>
    <property type="project" value="RGD"/>
</dbReference>
<dbReference type="GO" id="GO:0044877">
    <property type="term" value="F:protein-containing complex binding"/>
    <property type="evidence" value="ECO:0000353"/>
    <property type="project" value="RGD"/>
</dbReference>
<dbReference type="GO" id="GO:0031625">
    <property type="term" value="F:ubiquitin protein ligase binding"/>
    <property type="evidence" value="ECO:0000266"/>
    <property type="project" value="RGD"/>
</dbReference>
<dbReference type="GO" id="GO:0044389">
    <property type="term" value="F:ubiquitin-like protein ligase binding"/>
    <property type="evidence" value="ECO:0000266"/>
    <property type="project" value="RGD"/>
</dbReference>
<dbReference type="GO" id="GO:0140036">
    <property type="term" value="F:ubiquitin-modified protein reader activity"/>
    <property type="evidence" value="ECO:0000266"/>
    <property type="project" value="RGD"/>
</dbReference>
<dbReference type="GO" id="GO:1990381">
    <property type="term" value="F:ubiquitin-specific protease binding"/>
    <property type="evidence" value="ECO:0000266"/>
    <property type="project" value="RGD"/>
</dbReference>
<dbReference type="GO" id="GO:0070842">
    <property type="term" value="P:aggresome assembly"/>
    <property type="evidence" value="ECO:0000266"/>
    <property type="project" value="RGD"/>
</dbReference>
<dbReference type="GO" id="GO:0046034">
    <property type="term" value="P:ATP metabolic process"/>
    <property type="evidence" value="ECO:0000266"/>
    <property type="project" value="RGD"/>
</dbReference>
<dbReference type="GO" id="GO:0097352">
    <property type="term" value="P:autophagosome maturation"/>
    <property type="evidence" value="ECO:0000250"/>
    <property type="project" value="UniProtKB"/>
</dbReference>
<dbReference type="GO" id="GO:0006914">
    <property type="term" value="P:autophagy"/>
    <property type="evidence" value="ECO:0000250"/>
    <property type="project" value="UniProtKB"/>
</dbReference>
<dbReference type="GO" id="GO:1903843">
    <property type="term" value="P:cellular response to arsenite ion"/>
    <property type="evidence" value="ECO:0000250"/>
    <property type="project" value="UniProtKB"/>
</dbReference>
<dbReference type="GO" id="GO:0034605">
    <property type="term" value="P:cellular response to heat"/>
    <property type="evidence" value="ECO:0000250"/>
    <property type="project" value="UniProtKB"/>
</dbReference>
<dbReference type="GO" id="GO:0071218">
    <property type="term" value="P:cellular response to misfolded protein"/>
    <property type="evidence" value="ECO:0000266"/>
    <property type="project" value="RGD"/>
</dbReference>
<dbReference type="GO" id="GO:0140455">
    <property type="term" value="P:cytoplasm protein quality control"/>
    <property type="evidence" value="ECO:0000266"/>
    <property type="project" value="RGD"/>
</dbReference>
<dbReference type="GO" id="GO:0006974">
    <property type="term" value="P:DNA damage response"/>
    <property type="evidence" value="ECO:0000250"/>
    <property type="project" value="UniProtKB"/>
</dbReference>
<dbReference type="GO" id="GO:0006281">
    <property type="term" value="P:DNA repair"/>
    <property type="evidence" value="ECO:0000250"/>
    <property type="project" value="UniProtKB"/>
</dbReference>
<dbReference type="GO" id="GO:0006302">
    <property type="term" value="P:double-strand break repair"/>
    <property type="evidence" value="ECO:0000250"/>
    <property type="project" value="UniProtKB"/>
</dbReference>
<dbReference type="GO" id="GO:0061857">
    <property type="term" value="P:endoplasmic reticulum stress-induced pre-emptive quality control"/>
    <property type="evidence" value="ECO:0000250"/>
    <property type="project" value="UniProtKB"/>
</dbReference>
<dbReference type="GO" id="GO:0006888">
    <property type="term" value="P:endoplasmic reticulum to Golgi vesicle-mediated transport"/>
    <property type="evidence" value="ECO:0000315"/>
    <property type="project" value="RGD"/>
</dbReference>
<dbReference type="GO" id="GO:0032510">
    <property type="term" value="P:endosome to lysosome transport via multivesicular body sorting pathway"/>
    <property type="evidence" value="ECO:0000250"/>
    <property type="project" value="UniProtKB"/>
</dbReference>
<dbReference type="GO" id="GO:0036503">
    <property type="term" value="P:ERAD pathway"/>
    <property type="evidence" value="ECO:0000314"/>
    <property type="project" value="ComplexPortal"/>
</dbReference>
<dbReference type="GO" id="GO:0072389">
    <property type="term" value="P:flavin adenine dinucleotide catabolic process"/>
    <property type="evidence" value="ECO:0000266"/>
    <property type="project" value="RGD"/>
</dbReference>
<dbReference type="GO" id="GO:0036297">
    <property type="term" value="P:interstrand cross-link repair"/>
    <property type="evidence" value="ECO:0000250"/>
    <property type="project" value="UniProtKB"/>
</dbReference>
<dbReference type="GO" id="GO:0016236">
    <property type="term" value="P:macroautophagy"/>
    <property type="evidence" value="ECO:0000250"/>
    <property type="project" value="UniProtKB"/>
</dbReference>
<dbReference type="GO" id="GO:0051228">
    <property type="term" value="P:mitotic spindle disassembly"/>
    <property type="evidence" value="ECO:0000318"/>
    <property type="project" value="GO_Central"/>
</dbReference>
<dbReference type="GO" id="GO:0006734">
    <property type="term" value="P:NADH metabolic process"/>
    <property type="evidence" value="ECO:0000266"/>
    <property type="project" value="RGD"/>
</dbReference>
<dbReference type="GO" id="GO:0035331">
    <property type="term" value="P:negative regulation of hippo signaling"/>
    <property type="evidence" value="ECO:0000266"/>
    <property type="project" value="RGD"/>
</dbReference>
<dbReference type="GO" id="GO:0120186">
    <property type="term" value="P:negative regulation of protein localization to chromatin"/>
    <property type="evidence" value="ECO:0000266"/>
    <property type="project" value="RGD"/>
</dbReference>
<dbReference type="GO" id="GO:0045879">
    <property type="term" value="P:negative regulation of smoothened signaling pathway"/>
    <property type="evidence" value="ECO:0000266"/>
    <property type="project" value="RGD"/>
</dbReference>
<dbReference type="GO" id="GO:2001171">
    <property type="term" value="P:positive regulation of ATP biosynthetic process"/>
    <property type="evidence" value="ECO:0000266"/>
    <property type="project" value="RGD"/>
</dbReference>
<dbReference type="GO" id="GO:0090263">
    <property type="term" value="P:positive regulation of canonical Wnt signaling pathway"/>
    <property type="evidence" value="ECO:0000266"/>
    <property type="project" value="RGD"/>
</dbReference>
<dbReference type="GO" id="GO:0010918">
    <property type="term" value="P:positive regulation of mitochondrial membrane potential"/>
    <property type="evidence" value="ECO:0000266"/>
    <property type="project" value="RGD"/>
</dbReference>
<dbReference type="GO" id="GO:1901224">
    <property type="term" value="P:positive regulation of non-canonical NF-kappaB signal transduction"/>
    <property type="evidence" value="ECO:0000266"/>
    <property type="project" value="RGD"/>
</dbReference>
<dbReference type="GO" id="GO:1903862">
    <property type="term" value="P:positive regulation of oxidative phosphorylation"/>
    <property type="evidence" value="ECO:0000266"/>
    <property type="project" value="RGD"/>
</dbReference>
<dbReference type="GO" id="GO:0032436">
    <property type="term" value="P:positive regulation of proteasomal ubiquitin-dependent protein catabolic process"/>
    <property type="evidence" value="ECO:0000266"/>
    <property type="project" value="RGD"/>
</dbReference>
<dbReference type="GO" id="GO:0045732">
    <property type="term" value="P:positive regulation of protein catabolic process"/>
    <property type="evidence" value="ECO:0000266"/>
    <property type="project" value="RGD"/>
</dbReference>
<dbReference type="GO" id="GO:1903006">
    <property type="term" value="P:positive regulation of protein K63-linked deubiquitination"/>
    <property type="evidence" value="ECO:0000266"/>
    <property type="project" value="RGD"/>
</dbReference>
<dbReference type="GO" id="GO:0031334">
    <property type="term" value="P:positive regulation of protein-containing complex assembly"/>
    <property type="evidence" value="ECO:0000266"/>
    <property type="project" value="RGD"/>
</dbReference>
<dbReference type="GO" id="GO:2000060">
    <property type="term" value="P:positive regulation of ubiquitin-dependent protein catabolic process"/>
    <property type="evidence" value="ECO:0000315"/>
    <property type="project" value="RGD"/>
</dbReference>
<dbReference type="GO" id="GO:0010498">
    <property type="term" value="P:proteasomal protein catabolic process"/>
    <property type="evidence" value="ECO:0000250"/>
    <property type="project" value="UniProtKB"/>
</dbReference>
<dbReference type="GO" id="GO:0043161">
    <property type="term" value="P:proteasome-mediated ubiquitin-dependent protein catabolic process"/>
    <property type="evidence" value="ECO:0000250"/>
    <property type="project" value="UniProtKB"/>
</dbReference>
<dbReference type="GO" id="GO:0016567">
    <property type="term" value="P:protein ubiquitination"/>
    <property type="evidence" value="ECO:0000250"/>
    <property type="project" value="UniProtKB"/>
</dbReference>
<dbReference type="GO" id="GO:0106300">
    <property type="term" value="P:protein-DNA covalent cross-linking repair"/>
    <property type="evidence" value="ECO:0000250"/>
    <property type="project" value="UniProtKB"/>
</dbReference>
<dbReference type="GO" id="GO:1903715">
    <property type="term" value="P:regulation of aerobic respiration"/>
    <property type="evidence" value="ECO:0000266"/>
    <property type="project" value="RGD"/>
</dbReference>
<dbReference type="GO" id="GO:1905634">
    <property type="term" value="P:regulation of protein localization to chromatin"/>
    <property type="evidence" value="ECO:0000250"/>
    <property type="project" value="UniProtKB"/>
</dbReference>
<dbReference type="GO" id="GO:0050807">
    <property type="term" value="P:regulation of synapse organization"/>
    <property type="evidence" value="ECO:0000314"/>
    <property type="project" value="SynGO"/>
</dbReference>
<dbReference type="GO" id="GO:0030970">
    <property type="term" value="P:retrograde protein transport, ER to cytosol"/>
    <property type="evidence" value="ECO:0000269"/>
    <property type="project" value="ComplexPortal"/>
</dbReference>
<dbReference type="GO" id="GO:0035617">
    <property type="term" value="P:stress granule disassembly"/>
    <property type="evidence" value="ECO:0000250"/>
    <property type="project" value="UniProtKB"/>
</dbReference>
<dbReference type="GO" id="GO:0019985">
    <property type="term" value="P:translesion synthesis"/>
    <property type="evidence" value="ECO:0000250"/>
    <property type="project" value="UniProtKB"/>
</dbReference>
<dbReference type="GO" id="GO:0006511">
    <property type="term" value="P:ubiquitin-dependent protein catabolic process"/>
    <property type="evidence" value="ECO:0000266"/>
    <property type="project" value="RGD"/>
</dbReference>
<dbReference type="GO" id="GO:0019079">
    <property type="term" value="P:viral genome replication"/>
    <property type="evidence" value="ECO:0000266"/>
    <property type="project" value="RGD"/>
</dbReference>
<dbReference type="CDD" id="cd19519">
    <property type="entry name" value="RecA-like_CDC48_r1-like"/>
    <property type="match status" value="1"/>
</dbReference>
<dbReference type="CDD" id="cd19528">
    <property type="entry name" value="RecA-like_CDC48_r2-like"/>
    <property type="match status" value="1"/>
</dbReference>
<dbReference type="FunFam" id="1.10.8.60:FF:000004">
    <property type="entry name" value="Cell division control 48"/>
    <property type="match status" value="1"/>
</dbReference>
<dbReference type="FunFam" id="3.10.330.10:FF:000001">
    <property type="entry name" value="Cell division control 48"/>
    <property type="match status" value="1"/>
</dbReference>
<dbReference type="FunFam" id="2.40.40.20:FF:000003">
    <property type="entry name" value="Transitional endoplasmic reticulum ATPase"/>
    <property type="match status" value="1"/>
</dbReference>
<dbReference type="FunFam" id="3.40.50.300:FF:000012">
    <property type="entry name" value="Transitional endoplasmic reticulum ATPase"/>
    <property type="match status" value="1"/>
</dbReference>
<dbReference type="FunFam" id="3.40.50.300:FF:000048">
    <property type="entry name" value="Transitional endoplasmic reticulum ATPase"/>
    <property type="match status" value="1"/>
</dbReference>
<dbReference type="Gene3D" id="1.10.8.60">
    <property type="match status" value="1"/>
</dbReference>
<dbReference type="Gene3D" id="2.40.40.20">
    <property type="match status" value="1"/>
</dbReference>
<dbReference type="Gene3D" id="3.10.330.10">
    <property type="match status" value="1"/>
</dbReference>
<dbReference type="Gene3D" id="6.10.20.150">
    <property type="match status" value="1"/>
</dbReference>
<dbReference type="Gene3D" id="3.40.50.300">
    <property type="entry name" value="P-loop containing nucleotide triphosphate hydrolases"/>
    <property type="match status" value="2"/>
</dbReference>
<dbReference type="InterPro" id="IPR003593">
    <property type="entry name" value="AAA+_ATPase"/>
</dbReference>
<dbReference type="InterPro" id="IPR005938">
    <property type="entry name" value="AAA_ATPase_CDC48"/>
</dbReference>
<dbReference type="InterPro" id="IPR050168">
    <property type="entry name" value="AAA_ATPase_domain"/>
</dbReference>
<dbReference type="InterPro" id="IPR041569">
    <property type="entry name" value="AAA_lid_3"/>
</dbReference>
<dbReference type="InterPro" id="IPR009010">
    <property type="entry name" value="Asp_de-COase-like_dom_sf"/>
</dbReference>
<dbReference type="InterPro" id="IPR003959">
    <property type="entry name" value="ATPase_AAA_core"/>
</dbReference>
<dbReference type="InterPro" id="IPR003960">
    <property type="entry name" value="ATPase_AAA_CS"/>
</dbReference>
<dbReference type="InterPro" id="IPR004201">
    <property type="entry name" value="Cdc48_dom2"/>
</dbReference>
<dbReference type="InterPro" id="IPR029067">
    <property type="entry name" value="CDC48_domain_2-like_sf"/>
</dbReference>
<dbReference type="InterPro" id="IPR003338">
    <property type="entry name" value="CDC4_N-term_subdom"/>
</dbReference>
<dbReference type="InterPro" id="IPR027417">
    <property type="entry name" value="P-loop_NTPase"/>
</dbReference>
<dbReference type="NCBIfam" id="TIGR01243">
    <property type="entry name" value="CDC48"/>
    <property type="match status" value="1"/>
</dbReference>
<dbReference type="PANTHER" id="PTHR23077">
    <property type="entry name" value="AAA-FAMILY ATPASE"/>
    <property type="match status" value="1"/>
</dbReference>
<dbReference type="PANTHER" id="PTHR23077:SF69">
    <property type="entry name" value="TRANSITIONAL ENDOPLASMIC RETICULUM ATPASE"/>
    <property type="match status" value="1"/>
</dbReference>
<dbReference type="Pfam" id="PF00004">
    <property type="entry name" value="AAA"/>
    <property type="match status" value="2"/>
</dbReference>
<dbReference type="Pfam" id="PF17862">
    <property type="entry name" value="AAA_lid_3"/>
    <property type="match status" value="2"/>
</dbReference>
<dbReference type="Pfam" id="PF02933">
    <property type="entry name" value="CDC48_2"/>
    <property type="match status" value="1"/>
</dbReference>
<dbReference type="Pfam" id="PF02359">
    <property type="entry name" value="CDC48_N"/>
    <property type="match status" value="1"/>
</dbReference>
<dbReference type="SMART" id="SM00382">
    <property type="entry name" value="AAA"/>
    <property type="match status" value="2"/>
</dbReference>
<dbReference type="SMART" id="SM01072">
    <property type="entry name" value="CDC48_2"/>
    <property type="match status" value="1"/>
</dbReference>
<dbReference type="SMART" id="SM01073">
    <property type="entry name" value="CDC48_N"/>
    <property type="match status" value="1"/>
</dbReference>
<dbReference type="SUPFAM" id="SSF50692">
    <property type="entry name" value="ADC-like"/>
    <property type="match status" value="1"/>
</dbReference>
<dbReference type="SUPFAM" id="SSF54585">
    <property type="entry name" value="Cdc48 domain 2-like"/>
    <property type="match status" value="1"/>
</dbReference>
<dbReference type="SUPFAM" id="SSF52540">
    <property type="entry name" value="P-loop containing nucleoside triphosphate hydrolases"/>
    <property type="match status" value="2"/>
</dbReference>
<dbReference type="PROSITE" id="PS00674">
    <property type="entry name" value="AAA"/>
    <property type="match status" value="2"/>
</dbReference>
<protein>
    <recommendedName>
        <fullName>Transitional endoplasmic reticulum ATPase</fullName>
        <shortName>TER ATPase</shortName>
        <ecNumber evidence="3">3.6.4.6</ecNumber>
    </recommendedName>
    <alternativeName>
        <fullName>15S Mg(2+)-ATPase p97 subunit</fullName>
    </alternativeName>
    <alternativeName>
        <fullName>Valosin-containing protein</fullName>
        <shortName>VCP</shortName>
    </alternativeName>
</protein>
<comment type="function">
    <text evidence="2 3 7 8 11">Necessary for the fragmentation of Golgi stacks during mitosis and for their reassembly after mitosis. Involved in the formation of the transitional endoplasmic reticulum (tER). The transfer of membranes from the endoplasmic reticulum to the Golgi apparatus occurs via 50-70 nm transition vesicles which derive from part-rough, part-smooth transitional elements of the endoplasmic reticulum (tER) (PubMed:10930451, PubMed:12411482). Vesicle budding from the tER is an ATP-dependent process (PubMed:10930451, PubMed:12411482). The ternary complex containing UFD1, VCP and NPLOC4 binds ubiquitinated proteins and is necessary for the export of misfolded proteins from the ER to the cytoplasm, where they are degraded by the proteasome (PubMed:10930451, PubMed:12411482). The NPLOC4-UFD1-VCP complex regulates spindle disassembly at the end of mitosis and is necessary for the formation of a closed nuclear envelope. Regulates E3 ubiquitin-protein ligase activity of RNF19A. Component of the VCP/p97-AMFR/gp78 complex that participates in the final step of the sterol-mediated ubiquitination and endoplasmic reticulum-associated degradation (ERAD) of HMGCR. Mediates the endoplasmic reticulum-associated degradation of CHRNA3 in cortical neurons as part of the STUB1-VCP-UBXN2A complex (PubMed:26265139). Involved in endoplasmic reticulum stress-induced pre-emptive quality control, a mechanism that selectively attenuates the translocation of newly synthesized proteins into the endoplasmic reticulum and reroutes them to the cytosol for proteasomal degradation. Involved in clearance process by mediating G3BP1 extraction from stress granules (By similarity). Also involved in DNA damage response: recruited to double-strand breaks (DSBs) sites in a RNF8- and RNF168-dependent manner and promotes the recruitment of TP53BP1 at DNA damage sites. Recruited to stalled replication forks by SPRTN: may act by mediating extraction of DNA polymerase eta (POLH) to prevent excessive translesion DNA synthesis and limit the incidence of mutations induced by DNA damage. Together with SPRTN metalloprotease, involved in the repair of covalent DNA-protein cross-links (DPCs) during DNA synthesis. Involved in interstrand cross-link repair in response to replication stress by mediating unloading of the ubiquitinated CMG helicase complex. Mediates extraction of PARP1 trapped to chromatin: recognizes and binds ubiquitinated PARP1 and promotes its removal (By similarity). Required for cytoplasmic retrotranslocation of stressed/damaged mitochondrial outer-membrane proteins and their subsequent proteasomal degradation. Essential for the maturation of ubiquitin-containing autophagosomes and the clearance of ubiquitinated protein by autophagy. Acts as a negative regulator of type I interferon production by interacting with RIGI: interaction takes place when RIGI is ubiquitinated via 'Lys-63'-linked ubiquitin on its CARD domains, leading to recruit RNF125 and promote ubiquitination and degradation of RIGI (By similarity). May play a role in the ubiquitin-dependent sorting of membrane proteins to lysosomes where they undergo degradation (By similarity). May more particularly play a role in caveolins sorting in cells (By similarity). By controlling the steady-state expression of the IGF1R receptor, indirectly regulates the insulin-like growth factor receptor signaling pathway (By similarity).</text>
</comment>
<comment type="catalytic activity">
    <reaction evidence="3">
        <text>ATP + H2O = ADP + phosphate + H(+)</text>
        <dbReference type="Rhea" id="RHEA:13065"/>
        <dbReference type="ChEBI" id="CHEBI:15377"/>
        <dbReference type="ChEBI" id="CHEBI:15378"/>
        <dbReference type="ChEBI" id="CHEBI:30616"/>
        <dbReference type="ChEBI" id="CHEBI:43474"/>
        <dbReference type="ChEBI" id="CHEBI:456216"/>
        <dbReference type="EC" id="3.6.4.6"/>
    </reaction>
</comment>
<comment type="subunit">
    <text evidence="3 4 6 8 9 11 12">Homohexamer. Forms a ring-shaped particle of 12.5 nm diameter, that displays 6-fold radial symmetry. Interacts with NSFL1C-like protein p37; the complex has membrane fusion activity and is required for Golgi and endoplasmic reticulum biogenesis. Interacts with RHBDD1 (via C-terminal domain). Interacts with SELENOS and SYVN1, as well as with DERL1 (via SHP-box motif), DERL2 and DERL3; which probably transfer misfolded proteins from the ER to VCP. Interacts with SVIP and DERL1 (By similarity). Component of a complex required to couple retrotranslocation, ubiquitination and deglycosylation composed of NGLY1, SAKS1, AMFR, VCP and RAD23B. Part of a complex composed of STUB1/CHIP, VCP/p97, CHRNA3, and UBXN2A that modulates the ubiquitination and endoplasmic reticulum-associated degradation (ERAD) of CHRNA3 (PubMed:26265139). Within the complex UBXN2A acts as a scaffold protein required for the interaction of CHRNA3 with VCP/p97, this interaction also inhibits CHRNA3 ubiquitination by STUB1/CHIP and subsequently ERAD (PubMed:26265139). Interacts with UBXN2A (via UBX domain); the interaction is required for the interaction of CHRNA3 in the STUB1-VCP-UBXN2A complex (PubMed:26265139). Directly interacts with UBXN4 and RNF19A. Interacts with CASR. Interacts with UBE4B and YOD1. Interacts with clathrin. Interacts with RNF103. Interacts with TRIM13 and TRIM21. Component of a VCP/p97-AMFR/gp78 complex that participates in the final step of the endoplasmic reticulum-associated degradation (ERAD) of HMGCR. Interacts directly with AMFR/gp78 (via its VIM). Interacts with SPRTN; leading to recruitment to stalled replication forks. Part of a ternary complex containing STX5A, NSFL1C and VCP. NSFL1C forms a homotrimer that binds to one end of a VCP homohexamer. The complex binds to membranes enriched in phosphatidylethanolamine-containing lipids and promotes Golgi membrane fusion. Binds to a heterodimer of NPLOC4 and UFD1, binding to this heterodimer inhibits Golgi-membrane fusion. Interaction with VCIP135 leads to dissociation of the complex via ATP hydrolysis by VCP. Part of a ternary complex containing NPLOC4, UFD1 and VCP. Interacts with WASHC5. Interacts with UBOX5. Interacts (via N-terminus) with UBXN7, UBXN8, and probably several other UBX domain-containing proteins (via UBX domains); the interactions are mutually exclusive with VIM-dependent interactions such as those with AMFR and SELENOS. Forms a complex with UBQLN1 and UBXN4 (By similarity). Interacts (via the PIM motif) with RNF31 (via the PUB domain) (By similarity). Interacts with RIGI and RNF125; interaction takes place when RIGI is ubiquitinated via 'Lys-63'-linked ubiquitin on its CARD domains, leading to recruit RNF125 and promote ubiquitination and degradation of RIGI (By similarity). Interacts with BAG6 (By similarity). Interacts with UBXN10 (By similarity). Interacts with UBXN6; the interaction with UBXN6 is direct and competitive with UFD1 (By similarity). Forms a ternary complex with CAV1 and UBXN6. Interacts with PLAA, UBXN6 and YOD1; may form a complex involved in macroautophagy (By similarity). Interacts with ANKZF1 (By similarity). Interacts with ubiquitin-binding protein FAF1 (By similarity). Interacts with ZFAND2B (via VIM motif); the interaction is direct (By similarity). Interacts with ZFAND1 (via its ubiquitin-like region); this interaction occurs in an arsenite-dependent manner (By similarity). Interacts with CCDC47 (By similarity). Interacts with LMBR1L and UBAC2 (By similarity). Interacts with ATXN3 (By similarity). Interacts with TEX264; bridging VCP to covalent DNA-protein cross-links (DPCs) (By similarity).</text>
</comment>
<comment type="interaction">
    <interactant intactId="EBI-399011">
        <id>P46462</id>
    </interactant>
    <interactant intactId="EBI-1993760">
        <id>O35987</id>
        <label>Nsfl1c</label>
    </interactant>
    <organismsDiffer>false</organismsDiffer>
    <experiments>12</experiments>
</comment>
<comment type="subcellular location">
    <subcellularLocation>
        <location evidence="6">Cytoplasm</location>
        <location evidence="6">Cytosol</location>
    </subcellularLocation>
    <subcellularLocation>
        <location evidence="3">Endoplasmic reticulum</location>
    </subcellularLocation>
    <subcellularLocation>
        <location evidence="6">Nucleus</location>
    </subcellularLocation>
    <subcellularLocation>
        <location evidence="3">Cytoplasm</location>
        <location evidence="3">Stress granule</location>
    </subcellularLocation>
    <text evidence="3">Recruited to the cytoplasmic surface of the endoplasmic reticulum via interaction with AMFR/gp78. Following DNA double-strand breaks, recruited to the sites of damage. Recruited to stalled replication forks via interaction with SPRTN. Recruited to damaged lysosomes decorated with K48-linked ubiquitin chains. Colocalizes with TIA1, ZFAND1 and G3BP1 in cytoplasmic stress granules (SGs) in response to arsenite-induced stress treatment (By similarity).</text>
</comment>
<comment type="domain">
    <text evidence="3">The PIM (PUB-interaction motif) motif mediates interaction with the PUB domain of RNF31.</text>
</comment>
<comment type="PTM">
    <text evidence="10">Phosphorylated by tyrosine kinases in response to T-cell antigen receptor activation. Phosphorylated in mitotic cells.</text>
</comment>
<comment type="PTM">
    <text evidence="3">ISGylated.</text>
</comment>
<comment type="PTM">
    <text evidence="3">Methylation at Lys-315 catalyzed by VCPKMT is increased in the presence of ASPSCR1. Lys-315 methylation may decrease ATPase activity.</text>
</comment>
<comment type="similarity">
    <text evidence="13">Belongs to the AAA ATPase family.</text>
</comment>
<sequence>MASGADSKGDDLSTAILKQKNRPNRLIVDEAINEDNSVVSLSQPKMDELQLFRGDTVLLKGKKRREAVCIVLSDDTCSDEKIRMNRVVRNNLRVRLGDVISIQPCPDVKYGKRIHVLPIDDTVEGITGNLFEVYLKPYFLEAYRPIRKGDIFLVRGGMRAVEFKVVETDPSPYCIVAPDTVIHCEGEPIKREDEEESLNEVGYDDIGGCRKQLAQIKEMVELPLRHPALFKAIGVKPPRGILLYGPPGTGKTLIARAVANETGAFFFLINGPEIMSKLAGESESNLRKAFEEAEKNAPAIIFIDELDAIAPKREKTHGEVERRIVSQLLTLMDGLKQRAHVIVMAATNRPNSIDPALRRFGRFDREVDIGIPDATGRLEILQIHTKNMKLADDVDLEQVANETHGHVGADLAALCSEAALQAIRKKMDLIDLEDETIDAEVMNSLAVTMDDFRWALSQSNPSALRETVVEVPQVTWEDIGGLEDVKRELQELVQYPVEHPDKFLKFGMTPSKGVLFYGPPGCGKTLLAKAIANECQANFISIKGPELLTMWFGESEANVREIFDKARQAAPCVLFFDELDSIAKARGGNIGDGGGAADRVINQILTEMDGMSTKKNVFIIGATNRPDIIDPAILRPGRLDQLIYIPLPDEKSRVAILKANLRKSPVAKDVDLEFLAKMTNGFSGADLTEICQRACKLAIRESIESEIRRERERQTNPSAMEVEEDDPVPEIRRDHFEEAMRFARRSVSDNDIRKYEMFAQTLQQSRGFGSFRFPSGNQGGAGPSQGSGGGTGGNVYTEDNDDDLYG</sequence>
<feature type="initiator methionine" description="Removed" evidence="3">
    <location>
        <position position="1"/>
    </location>
</feature>
<feature type="chain" id="PRO_0000084575" description="Transitional endoplasmic reticulum ATPase">
    <location>
        <begin position="2"/>
        <end position="806"/>
    </location>
</feature>
<feature type="region of interest" description="Disordered" evidence="5">
    <location>
        <begin position="708"/>
        <end position="727"/>
    </location>
</feature>
<feature type="region of interest" description="Disordered" evidence="5">
    <location>
        <begin position="768"/>
        <end position="806"/>
    </location>
</feature>
<feature type="region of interest" description="Interaction with UBXN6" evidence="1">
    <location>
        <begin position="797"/>
        <end position="806"/>
    </location>
</feature>
<feature type="short sequence motif" description="PIM motif" evidence="3">
    <location>
        <begin position="802"/>
        <end position="806"/>
    </location>
</feature>
<feature type="compositionally biased region" description="Gly residues" evidence="5">
    <location>
        <begin position="777"/>
        <end position="793"/>
    </location>
</feature>
<feature type="binding site" evidence="3">
    <location>
        <begin position="247"/>
        <end position="253"/>
    </location>
    <ligand>
        <name>ATP</name>
        <dbReference type="ChEBI" id="CHEBI:30616"/>
        <label>1</label>
    </ligand>
</feature>
<feature type="binding site" evidence="3">
    <location>
        <position position="348"/>
    </location>
    <ligand>
        <name>ATP</name>
        <dbReference type="ChEBI" id="CHEBI:30616"/>
        <label>1</label>
    </ligand>
</feature>
<feature type="binding site" evidence="3">
    <location>
        <position position="384"/>
    </location>
    <ligand>
        <name>ATP</name>
        <dbReference type="ChEBI" id="CHEBI:30616"/>
        <label>1</label>
    </ligand>
</feature>
<feature type="binding site" evidence="4">
    <location>
        <begin position="521"/>
        <end position="526"/>
    </location>
    <ligand>
        <name>ATP</name>
        <dbReference type="ChEBI" id="CHEBI:30616"/>
        <label>2</label>
    </ligand>
</feature>
<feature type="modified residue" description="N-acetylalanine" evidence="3">
    <location>
        <position position="2"/>
    </location>
</feature>
<feature type="modified residue" description="Phosphoserine" evidence="14">
    <location>
        <position position="3"/>
    </location>
</feature>
<feature type="modified residue" description="Phosphoserine" evidence="14">
    <location>
        <position position="7"/>
    </location>
</feature>
<feature type="modified residue" description="Phosphoserine" evidence="3">
    <location>
        <position position="13"/>
    </location>
</feature>
<feature type="modified residue" description="Phosphoserine" evidence="3">
    <location>
        <position position="37"/>
    </location>
</feature>
<feature type="modified residue" description="N6,N6,N6-trimethyllysine; by VCPKMT" evidence="3">
    <location>
        <position position="315"/>
    </location>
</feature>
<feature type="modified residue" description="Phosphothreonine" evidence="3">
    <location>
        <position position="436"/>
    </location>
</feature>
<feature type="modified residue" description="Phosphoserine" evidence="3">
    <location>
        <position position="462"/>
    </location>
</feature>
<feature type="modified residue" description="N6-acetyllysine" evidence="4">
    <location>
        <position position="502"/>
    </location>
</feature>
<feature type="modified residue" description="N6-acetyllysine" evidence="4">
    <location>
        <position position="505"/>
    </location>
</feature>
<feature type="modified residue" description="N6-acetyllysine; alternate" evidence="4">
    <location>
        <position position="668"/>
    </location>
</feature>
<feature type="modified residue" description="N6-succinyllysine; alternate" evidence="4">
    <location>
        <position position="668"/>
    </location>
</feature>
<feature type="modified residue" description="Phosphoserine" evidence="3">
    <location>
        <position position="702"/>
    </location>
</feature>
<feature type="modified residue" description="N6-acetyllysine" evidence="4">
    <location>
        <position position="754"/>
    </location>
</feature>
<feature type="modified residue" description="Phosphoserine" evidence="3">
    <location>
        <position position="770"/>
    </location>
</feature>
<feature type="modified residue" description="Phosphoserine" evidence="3">
    <location>
        <position position="775"/>
    </location>
</feature>
<feature type="modified residue" description="Phosphoserine" evidence="3">
    <location>
        <position position="787"/>
    </location>
</feature>
<feature type="modified residue" description="Phosphotyrosine" evidence="4">
    <location>
        <position position="805"/>
    </location>
</feature>
<feature type="cross-link" description="Glycyl lysine isopeptide (Lys-Gly) (interchain with G-Cter in SUMO2)" evidence="3">
    <location>
        <position position="8"/>
    </location>
</feature>
<feature type="cross-link" description="Glycyl lysine isopeptide (Lys-Gly) (interchain with G-Cter in SUMO2)" evidence="3">
    <location>
        <position position="18"/>
    </location>
</feature>